<keyword id="KW-0106">Calcium</keyword>
<keyword id="KW-0256">Endoplasmic reticulum</keyword>
<keyword id="KW-0325">Glycoprotein</keyword>
<keyword id="KW-0472">Membrane</keyword>
<keyword id="KW-0597">Phosphoprotein</keyword>
<keyword id="KW-1185">Reference proteome</keyword>
<keyword id="KW-0732">Signal</keyword>
<keyword id="KW-0812">Transmembrane</keyword>
<keyword id="KW-1133">Transmembrane helix</keyword>
<feature type="signal peptide" evidence="3">
    <location>
        <begin position="1"/>
        <end position="21"/>
    </location>
</feature>
<feature type="chain" id="PRO_0000033284" description="Translocon-associated protein subunit alpha">
    <location>
        <begin position="22"/>
        <end position="286"/>
    </location>
</feature>
<feature type="topological domain" description="Lumenal" evidence="3">
    <location>
        <begin position="22"/>
        <end position="207"/>
    </location>
</feature>
<feature type="transmembrane region" description="Helical" evidence="3">
    <location>
        <begin position="208"/>
        <end position="228"/>
    </location>
</feature>
<feature type="topological domain" description="Cytoplasmic" evidence="3">
    <location>
        <begin position="229"/>
        <end position="286"/>
    </location>
</feature>
<feature type="region of interest" description="Disordered" evidence="4">
    <location>
        <begin position="28"/>
        <end position="83"/>
    </location>
</feature>
<feature type="region of interest" description="Disordered" evidence="4">
    <location>
        <begin position="264"/>
        <end position="286"/>
    </location>
</feature>
<feature type="compositionally biased region" description="Acidic residues" evidence="4">
    <location>
        <begin position="34"/>
        <end position="75"/>
    </location>
</feature>
<feature type="compositionally biased region" description="Basic residues" evidence="4">
    <location>
        <begin position="268"/>
        <end position="279"/>
    </location>
</feature>
<feature type="modified residue" description="Phosphoserine" evidence="2">
    <location>
        <position position="247"/>
    </location>
</feature>
<feature type="modified residue" description="Phosphothreonine" evidence="2">
    <location>
        <position position="260"/>
    </location>
</feature>
<feature type="modified residue" description="Phosphoserine" evidence="2">
    <location>
        <position position="268"/>
    </location>
</feature>
<feature type="glycosylation site" description="N-linked (GlcNAc...) asparagine" evidence="3">
    <location>
        <position position="136"/>
    </location>
</feature>
<feature type="glycosylation site" description="N-linked (GlcNAc...) asparagine" evidence="3">
    <location>
        <position position="191"/>
    </location>
</feature>
<proteinExistence type="evidence at transcript level"/>
<gene>
    <name type="primary">SSR1</name>
</gene>
<comment type="function">
    <text>TRAP proteins are part of a complex whose function is to bind calcium to the ER membrane and thereby regulate the retention of ER resident proteins. May be involved in the recycling of the translocation apparatus after completion of the translocation process or may function as a membrane-bound chaperone facilitating folding of translocated proteins.</text>
</comment>
<comment type="subunit">
    <text evidence="1">Heterotetramer of TRAP-alpha, TRAP-beta, TRAP-delta and TRAP-gamma. Interacts with palmitoylated calnexin (CALX), the interaction is required for efficient folding of glycosylated proteins (By similarity).</text>
</comment>
<comment type="subcellular location">
    <subcellularLocation>
        <location>Endoplasmic reticulum membrane</location>
        <topology>Single-pass type I membrane protein</topology>
    </subcellularLocation>
</comment>
<comment type="domain">
    <text>Shows a remarkable charge distribution with the N-terminus being highly negatively charged, and the cytoplasmic C-terminus positively charged.</text>
</comment>
<comment type="PTM">
    <text evidence="1">Phosphorylated in its cytoplasmic tail.</text>
</comment>
<comment type="miscellaneous">
    <text>Seems to bind calcium.</text>
</comment>
<comment type="similarity">
    <text evidence="5">Belongs to the TRAP-alpha family.</text>
</comment>
<evidence type="ECO:0000250" key="1"/>
<evidence type="ECO:0000250" key="2">
    <source>
        <dbReference type="UniProtKB" id="P43307"/>
    </source>
</evidence>
<evidence type="ECO:0000255" key="3"/>
<evidence type="ECO:0000256" key="4">
    <source>
        <dbReference type="SAM" id="MobiDB-lite"/>
    </source>
</evidence>
<evidence type="ECO:0000305" key="5"/>
<accession>P53815</accession>
<dbReference type="EMBL" id="U34847">
    <property type="protein sequence ID" value="AAA96272.1"/>
    <property type="molecule type" value="mRNA"/>
</dbReference>
<dbReference type="RefSeq" id="NP_001076222.1">
    <property type="nucleotide sequence ID" value="NM_001082753.1"/>
</dbReference>
<dbReference type="SMR" id="P53815"/>
<dbReference type="FunCoup" id="P53815">
    <property type="interactions" value="1938"/>
</dbReference>
<dbReference type="STRING" id="9986.ENSOCUP00000041433"/>
<dbReference type="GlyCosmos" id="P53815">
    <property type="glycosylation" value="2 sites, No reported glycans"/>
</dbReference>
<dbReference type="PaxDb" id="9986-ENSOCUP00000007844"/>
<dbReference type="GeneID" id="100009532"/>
<dbReference type="KEGG" id="ocu:100009532"/>
<dbReference type="CTD" id="6745"/>
<dbReference type="eggNOG" id="KOG1631">
    <property type="taxonomic scope" value="Eukaryota"/>
</dbReference>
<dbReference type="InParanoid" id="P53815"/>
<dbReference type="OrthoDB" id="1926781at2759"/>
<dbReference type="Proteomes" id="UP000001811">
    <property type="component" value="Unplaced"/>
</dbReference>
<dbReference type="GO" id="GO:0005789">
    <property type="term" value="C:endoplasmic reticulum membrane"/>
    <property type="evidence" value="ECO:0007669"/>
    <property type="project" value="UniProtKB-SubCell"/>
</dbReference>
<dbReference type="InterPro" id="IPR005595">
    <property type="entry name" value="TRAP_alpha"/>
</dbReference>
<dbReference type="PANTHER" id="PTHR12924:SF0">
    <property type="entry name" value="TRANSLOCON-ASSOCIATED PROTEIN SUBUNIT ALPHA"/>
    <property type="match status" value="1"/>
</dbReference>
<dbReference type="PANTHER" id="PTHR12924">
    <property type="entry name" value="TRANSLOCON-ASSOCIATED PROTEIN, ALPHA SUBUNIT"/>
    <property type="match status" value="1"/>
</dbReference>
<dbReference type="Pfam" id="PF03896">
    <property type="entry name" value="TRAP_alpha"/>
    <property type="match status" value="1"/>
</dbReference>
<organism>
    <name type="scientific">Oryctolagus cuniculus</name>
    <name type="common">Rabbit</name>
    <dbReference type="NCBI Taxonomy" id="9986"/>
    <lineage>
        <taxon>Eukaryota</taxon>
        <taxon>Metazoa</taxon>
        <taxon>Chordata</taxon>
        <taxon>Craniata</taxon>
        <taxon>Vertebrata</taxon>
        <taxon>Euteleostomi</taxon>
        <taxon>Mammalia</taxon>
        <taxon>Eutheria</taxon>
        <taxon>Euarchontoglires</taxon>
        <taxon>Glires</taxon>
        <taxon>Lagomorpha</taxon>
        <taxon>Leporidae</taxon>
        <taxon>Oryctolagus</taxon>
    </lineage>
</organism>
<reference key="1">
    <citation type="submission" date="1996-04" db="EMBL/GenBank/DDBJ databases">
        <authorList>
            <person name="Applequist S.E."/>
            <person name="Raman C."/>
            <person name="Beck-Engeser G.B."/>
            <person name="Jaeck H.-M."/>
        </authorList>
    </citation>
    <scope>NUCLEOTIDE SEQUENCE [MRNA]</scope>
    <source>
        <tissue>Spleen</tissue>
    </source>
</reference>
<name>SSRA_RABIT</name>
<protein>
    <recommendedName>
        <fullName>Translocon-associated protein subunit alpha</fullName>
        <shortName>TRAP-alpha</shortName>
    </recommendedName>
    <alternativeName>
        <fullName>Signal sequence receptor subunit alpha</fullName>
        <shortName>SSR-alpha</shortName>
    </alternativeName>
</protein>
<sequence>MRLLPRLLLLLLLVFPATVLLRGGPGGSLAEAQDLSEDEETVEDSVIEDEDDEAEVEEDEPTDLAEDREEEDVSGEPEASPSADTTILFVKGEDFPANNIVRFLVGFTNKGTEDFIVESLDASFRYPQDYQFYIQNFTALPLNTIVPPQRQATFEYSFIPAEPMGGRPFGLVINLNYKDFNGNVFQDAVFNQTVTVIEREDGLDGQTIFMYMSLAGLGLLVVVGLHQLLESRNRKRPIQKVEMGTSSQNDVDMSWIPQETLNQINKASPRRLPRKRPQKRSVGSDE</sequence>